<evidence type="ECO:0000255" key="1">
    <source>
        <dbReference type="HAMAP-Rule" id="MF_00188"/>
    </source>
</evidence>
<reference key="1">
    <citation type="journal article" date="2002" name="Proc. Natl. Acad. Sci. U.S.A.">
        <title>Complete genome sequence and comparative genomic analysis of an emerging human pathogen, serotype V Streptococcus agalactiae.</title>
        <authorList>
            <person name="Tettelin H."/>
            <person name="Masignani V."/>
            <person name="Cieslewicz M.J."/>
            <person name="Eisen J.A."/>
            <person name="Peterson S.N."/>
            <person name="Wessels M.R."/>
            <person name="Paulsen I.T."/>
            <person name="Nelson K.E."/>
            <person name="Margarit I."/>
            <person name="Read T.D."/>
            <person name="Madoff L.C."/>
            <person name="Wolf A.M."/>
            <person name="Beanan M.J."/>
            <person name="Brinkac L.M."/>
            <person name="Daugherty S.C."/>
            <person name="DeBoy R.T."/>
            <person name="Durkin A.S."/>
            <person name="Kolonay J.F."/>
            <person name="Madupu R."/>
            <person name="Lewis M.R."/>
            <person name="Radune D."/>
            <person name="Fedorova N.B."/>
            <person name="Scanlan D."/>
            <person name="Khouri H.M."/>
            <person name="Mulligan S."/>
            <person name="Carty H.A."/>
            <person name="Cline R.T."/>
            <person name="Van Aken S.E."/>
            <person name="Gill J."/>
            <person name="Scarselli M."/>
            <person name="Mora M."/>
            <person name="Iacobini E.T."/>
            <person name="Brettoni C."/>
            <person name="Galli G."/>
            <person name="Mariani M."/>
            <person name="Vegni F."/>
            <person name="Maione D."/>
            <person name="Rinaudo D."/>
            <person name="Rappuoli R."/>
            <person name="Telford J.L."/>
            <person name="Kasper D.L."/>
            <person name="Grandi G."/>
            <person name="Fraser C.M."/>
        </authorList>
    </citation>
    <scope>NUCLEOTIDE SEQUENCE [LARGE SCALE GENOMIC DNA]</scope>
    <source>
        <strain>ATCC BAA-611 / 2603 V/R</strain>
    </source>
</reference>
<sequence length="296" mass="32371">MLYQQIASNKRKTVVLLIVFFCLLAAIGAAVGYLVLGSYQFGLVLALIIGVIYAVSMIFQSTNVVMSMNNAREVTEDEAPNYFHIVEDMAMIAQIPMPRVFIVEDDSLNAFATGSKPENAAVAATTGLLAVMNREELEGVIGHEVSHIRNYDIRISTIAVALASAVTLISSIGSRMLFYGGGRRRDDDREDGGNILVLIFSILSLILAPLAASLVQLAISRQREYLADASSVELTRNPQGMISALEKLDRSEPMGHPVDDASAALYINDPTKKEGLKSLFYTHPPIADRIERLRHM</sequence>
<name>HTPX_STRA5</name>
<accession>Q8DY66</accession>
<keyword id="KW-1003">Cell membrane</keyword>
<keyword id="KW-0378">Hydrolase</keyword>
<keyword id="KW-0472">Membrane</keyword>
<keyword id="KW-0479">Metal-binding</keyword>
<keyword id="KW-0482">Metalloprotease</keyword>
<keyword id="KW-0645">Protease</keyword>
<keyword id="KW-1185">Reference proteome</keyword>
<keyword id="KW-0812">Transmembrane</keyword>
<keyword id="KW-1133">Transmembrane helix</keyword>
<keyword id="KW-0862">Zinc</keyword>
<protein>
    <recommendedName>
        <fullName evidence="1">Protease HtpX homolog</fullName>
        <ecNumber evidence="1">3.4.24.-</ecNumber>
    </recommendedName>
</protein>
<proteinExistence type="inferred from homology"/>
<organism>
    <name type="scientific">Streptococcus agalactiae serotype V (strain ATCC BAA-611 / 2603 V/R)</name>
    <dbReference type="NCBI Taxonomy" id="208435"/>
    <lineage>
        <taxon>Bacteria</taxon>
        <taxon>Bacillati</taxon>
        <taxon>Bacillota</taxon>
        <taxon>Bacilli</taxon>
        <taxon>Lactobacillales</taxon>
        <taxon>Streptococcaceae</taxon>
        <taxon>Streptococcus</taxon>
    </lineage>
</organism>
<comment type="cofactor">
    <cofactor evidence="1">
        <name>Zn(2+)</name>
        <dbReference type="ChEBI" id="CHEBI:29105"/>
    </cofactor>
    <text evidence="1">Binds 1 zinc ion per subunit.</text>
</comment>
<comment type="subcellular location">
    <subcellularLocation>
        <location evidence="1">Cell membrane</location>
        <topology evidence="1">Multi-pass membrane protein</topology>
    </subcellularLocation>
</comment>
<comment type="similarity">
    <text evidence="1">Belongs to the peptidase M48B family.</text>
</comment>
<feature type="chain" id="PRO_0000138891" description="Protease HtpX homolog">
    <location>
        <begin position="1"/>
        <end position="296"/>
    </location>
</feature>
<feature type="transmembrane region" description="Helical" evidence="1">
    <location>
        <begin position="14"/>
        <end position="34"/>
    </location>
</feature>
<feature type="transmembrane region" description="Helical" evidence="1">
    <location>
        <begin position="39"/>
        <end position="59"/>
    </location>
</feature>
<feature type="transmembrane region" description="Helical" evidence="1">
    <location>
        <begin position="158"/>
        <end position="178"/>
    </location>
</feature>
<feature type="transmembrane region" description="Helical" evidence="1">
    <location>
        <begin position="195"/>
        <end position="215"/>
    </location>
</feature>
<feature type="active site" evidence="1">
    <location>
        <position position="144"/>
    </location>
</feature>
<feature type="binding site" evidence="1">
    <location>
        <position position="143"/>
    </location>
    <ligand>
        <name>Zn(2+)</name>
        <dbReference type="ChEBI" id="CHEBI:29105"/>
        <note>catalytic</note>
    </ligand>
</feature>
<feature type="binding site" evidence="1">
    <location>
        <position position="147"/>
    </location>
    <ligand>
        <name>Zn(2+)</name>
        <dbReference type="ChEBI" id="CHEBI:29105"/>
        <note>catalytic</note>
    </ligand>
</feature>
<feature type="binding site" evidence="1">
    <location>
        <position position="224"/>
    </location>
    <ligand>
        <name>Zn(2+)</name>
        <dbReference type="ChEBI" id="CHEBI:29105"/>
        <note>catalytic</note>
    </ligand>
</feature>
<dbReference type="EC" id="3.4.24.-" evidence="1"/>
<dbReference type="EMBL" id="AE009948">
    <property type="protein sequence ID" value="AAN00491.1"/>
    <property type="molecule type" value="Genomic_DNA"/>
</dbReference>
<dbReference type="RefSeq" id="NP_688618.1">
    <property type="nucleotide sequence ID" value="NC_004116.1"/>
</dbReference>
<dbReference type="RefSeq" id="WP_000966817.1">
    <property type="nucleotide sequence ID" value="NC_004116.1"/>
</dbReference>
<dbReference type="STRING" id="208435.SAG1627"/>
<dbReference type="GeneID" id="66886471"/>
<dbReference type="KEGG" id="sag:SAG1627"/>
<dbReference type="PATRIC" id="fig|208435.3.peg.1638"/>
<dbReference type="HOGENOM" id="CLU_042266_2_1_9"/>
<dbReference type="OrthoDB" id="15218at2"/>
<dbReference type="Proteomes" id="UP000000821">
    <property type="component" value="Chromosome"/>
</dbReference>
<dbReference type="GO" id="GO:0005886">
    <property type="term" value="C:plasma membrane"/>
    <property type="evidence" value="ECO:0007669"/>
    <property type="project" value="UniProtKB-SubCell"/>
</dbReference>
<dbReference type="GO" id="GO:0004222">
    <property type="term" value="F:metalloendopeptidase activity"/>
    <property type="evidence" value="ECO:0007669"/>
    <property type="project" value="UniProtKB-UniRule"/>
</dbReference>
<dbReference type="GO" id="GO:0008270">
    <property type="term" value="F:zinc ion binding"/>
    <property type="evidence" value="ECO:0007669"/>
    <property type="project" value="UniProtKB-UniRule"/>
</dbReference>
<dbReference type="GO" id="GO:0006508">
    <property type="term" value="P:proteolysis"/>
    <property type="evidence" value="ECO:0007669"/>
    <property type="project" value="UniProtKB-KW"/>
</dbReference>
<dbReference type="CDD" id="cd07340">
    <property type="entry name" value="M48B_Htpx_like"/>
    <property type="match status" value="1"/>
</dbReference>
<dbReference type="Gene3D" id="3.30.2010.10">
    <property type="entry name" value="Metalloproteases ('zincins'), catalytic domain"/>
    <property type="match status" value="1"/>
</dbReference>
<dbReference type="HAMAP" id="MF_00188">
    <property type="entry name" value="Pept_M48_protease_HtpX"/>
    <property type="match status" value="1"/>
</dbReference>
<dbReference type="InterPro" id="IPR050083">
    <property type="entry name" value="HtpX_protease"/>
</dbReference>
<dbReference type="InterPro" id="IPR022919">
    <property type="entry name" value="Pept_M48_protease_HtpX"/>
</dbReference>
<dbReference type="InterPro" id="IPR001915">
    <property type="entry name" value="Peptidase_M48"/>
</dbReference>
<dbReference type="NCBIfam" id="NF003425">
    <property type="entry name" value="PRK04897.1"/>
    <property type="match status" value="1"/>
</dbReference>
<dbReference type="PANTHER" id="PTHR43221">
    <property type="entry name" value="PROTEASE HTPX"/>
    <property type="match status" value="1"/>
</dbReference>
<dbReference type="PANTHER" id="PTHR43221:SF1">
    <property type="entry name" value="PROTEASE HTPX"/>
    <property type="match status" value="1"/>
</dbReference>
<dbReference type="Pfam" id="PF01435">
    <property type="entry name" value="Peptidase_M48"/>
    <property type="match status" value="1"/>
</dbReference>
<gene>
    <name evidence="1" type="primary">htpX</name>
    <name type="ordered locus">SAG1627</name>
</gene>